<evidence type="ECO:0000255" key="1">
    <source>
        <dbReference type="HAMAP-Rule" id="MF_01166"/>
    </source>
</evidence>
<sequence>MKTVVFAYHDMGCLGIEALLAAGYEISAIFTHTDNPGEKAFYGSVAHLAAERGIPVYAPDNVNHPLWVERIAQLSPEVIFSFYYRHLICDEILQLAPAGAFNLHGSLLPKYRGRAPLNWVLVNGETETGVTLHRMVKRADAGAIVAQLRVAIAPDDIAITLHHKLCHATRQLLEQTLPAIKHGNILEIAQRENEATCFGRRTPDDSFLEWHKPASVLHNMVRAVADPWPGAFSYVGNQKFTVWSSRVHPHASKAQPGSVISIAPLLIACGDGALEIVTGQAGDGITMQGSQLAQTLGLVQGSRLNSQPACTARRRTRVLILGVNGFIGNHLTERLLREDHYEVYGLDIGSDAISRFLNHPHFHFVEGDISIHSEWIEYHVKKCDVVLPLVAIATPIEYTRNPLRVFELDFEENLRIIRYCVKYRKRIIFPSTSEVYGMCSDKYFDEDHSNLIVGPVNKPRWIYSVSKQLLDRVIWAYGEKEGLQFTLFRPFNWMGPRLDNLNAARIGSSRAITQLILNLVEGSPIKLIDGGKQKRCFTDIRDGIEALYRIIENAGNRCDGEIINIGNPENEASIEELGEMLLASFEKHPLRHHFPPFAGFRVVESSSYYGKGYQDVEHRKPSIRNAHRCLDWEPKIDMQETIDETLDFFLRTVDLTDKPS</sequence>
<accession>Q31YK2</accession>
<reference key="1">
    <citation type="journal article" date="2005" name="Nucleic Acids Res.">
        <title>Genome dynamics and diversity of Shigella species, the etiologic agents of bacillary dysentery.</title>
        <authorList>
            <person name="Yang F."/>
            <person name="Yang J."/>
            <person name="Zhang X."/>
            <person name="Chen L."/>
            <person name="Jiang Y."/>
            <person name="Yan Y."/>
            <person name="Tang X."/>
            <person name="Wang J."/>
            <person name="Xiong Z."/>
            <person name="Dong J."/>
            <person name="Xue Y."/>
            <person name="Zhu Y."/>
            <person name="Xu X."/>
            <person name="Sun L."/>
            <person name="Chen S."/>
            <person name="Nie H."/>
            <person name="Peng J."/>
            <person name="Xu J."/>
            <person name="Wang Y."/>
            <person name="Yuan Z."/>
            <person name="Wen Y."/>
            <person name="Yao Z."/>
            <person name="Shen Y."/>
            <person name="Qiang B."/>
            <person name="Hou Y."/>
            <person name="Yu J."/>
            <person name="Jin Q."/>
        </authorList>
    </citation>
    <scope>NUCLEOTIDE SEQUENCE [LARGE SCALE GENOMIC DNA]</scope>
    <source>
        <strain>Sb227</strain>
    </source>
</reference>
<dbReference type="EC" id="2.1.2.13" evidence="1"/>
<dbReference type="EC" id="1.1.1.305" evidence="1"/>
<dbReference type="EMBL" id="CP000036">
    <property type="protein sequence ID" value="ABB66856.1"/>
    <property type="molecule type" value="Genomic_DNA"/>
</dbReference>
<dbReference type="RefSeq" id="WP_000860255.1">
    <property type="nucleotide sequence ID" value="NC_007613.1"/>
</dbReference>
<dbReference type="SMR" id="Q31YK2"/>
<dbReference type="KEGG" id="sbo:SBO_2292"/>
<dbReference type="HOGENOM" id="CLU_007383_23_2_6"/>
<dbReference type="UniPathway" id="UPA00030"/>
<dbReference type="UniPathway" id="UPA00032">
    <property type="reaction ID" value="UER00492"/>
</dbReference>
<dbReference type="UniPathway" id="UPA00032">
    <property type="reaction ID" value="UER00494"/>
</dbReference>
<dbReference type="Proteomes" id="UP000007067">
    <property type="component" value="Chromosome"/>
</dbReference>
<dbReference type="GO" id="GO:0016020">
    <property type="term" value="C:membrane"/>
    <property type="evidence" value="ECO:0007669"/>
    <property type="project" value="GOC"/>
</dbReference>
<dbReference type="GO" id="GO:0016831">
    <property type="term" value="F:carboxy-lyase activity"/>
    <property type="evidence" value="ECO:0007669"/>
    <property type="project" value="InterPro"/>
</dbReference>
<dbReference type="GO" id="GO:0099619">
    <property type="term" value="F:UDP-4-amino-4-deoxy-L-arabinose formyltransferase activity"/>
    <property type="evidence" value="ECO:0007669"/>
    <property type="project" value="UniProtKB-EC"/>
</dbReference>
<dbReference type="GO" id="GO:0099618">
    <property type="term" value="F:UDP-glucuronate dehydrogenase activity"/>
    <property type="evidence" value="ECO:0007669"/>
    <property type="project" value="UniProtKB-EC"/>
</dbReference>
<dbReference type="GO" id="GO:0009245">
    <property type="term" value="P:lipid A biosynthetic process"/>
    <property type="evidence" value="ECO:0007669"/>
    <property type="project" value="UniProtKB-KW"/>
</dbReference>
<dbReference type="GO" id="GO:0009103">
    <property type="term" value="P:lipopolysaccharide biosynthetic process"/>
    <property type="evidence" value="ECO:0007669"/>
    <property type="project" value="UniProtKB-UniRule"/>
</dbReference>
<dbReference type="GO" id="GO:0046677">
    <property type="term" value="P:response to antibiotic"/>
    <property type="evidence" value="ECO:0007669"/>
    <property type="project" value="UniProtKB-KW"/>
</dbReference>
<dbReference type="CDD" id="cd08702">
    <property type="entry name" value="Arna_FMT_C"/>
    <property type="match status" value="1"/>
</dbReference>
<dbReference type="CDD" id="cd05257">
    <property type="entry name" value="Arna_like_SDR_e"/>
    <property type="match status" value="1"/>
</dbReference>
<dbReference type="CDD" id="cd08644">
    <property type="entry name" value="FMT_core_ArnA_N"/>
    <property type="match status" value="1"/>
</dbReference>
<dbReference type="FunFam" id="3.40.50.12230:FF:000002">
    <property type="entry name" value="Bifunctional polymyxin resistance protein ArnA"/>
    <property type="match status" value="1"/>
</dbReference>
<dbReference type="FunFam" id="3.40.50.720:FF:000197">
    <property type="entry name" value="Bifunctional polymyxin resistance protein ArnA"/>
    <property type="match status" value="1"/>
</dbReference>
<dbReference type="Gene3D" id="3.40.50.12230">
    <property type="match status" value="1"/>
</dbReference>
<dbReference type="Gene3D" id="3.40.50.720">
    <property type="entry name" value="NAD(P)-binding Rossmann-like Domain"/>
    <property type="match status" value="1"/>
</dbReference>
<dbReference type="HAMAP" id="MF_01166">
    <property type="entry name" value="ArnA"/>
    <property type="match status" value="1"/>
</dbReference>
<dbReference type="InterPro" id="IPR045869">
    <property type="entry name" value="Arna-like_SDR_e"/>
</dbReference>
<dbReference type="InterPro" id="IPR021168">
    <property type="entry name" value="Bifun_polymyxin_resist_ArnA"/>
</dbReference>
<dbReference type="InterPro" id="IPR001509">
    <property type="entry name" value="Epimerase_deHydtase"/>
</dbReference>
<dbReference type="InterPro" id="IPR005793">
    <property type="entry name" value="Formyl_trans_C"/>
</dbReference>
<dbReference type="InterPro" id="IPR002376">
    <property type="entry name" value="Formyl_transf_N"/>
</dbReference>
<dbReference type="InterPro" id="IPR036477">
    <property type="entry name" value="Formyl_transf_N_sf"/>
</dbReference>
<dbReference type="InterPro" id="IPR011034">
    <property type="entry name" value="Formyl_transferase-like_C_sf"/>
</dbReference>
<dbReference type="InterPro" id="IPR050177">
    <property type="entry name" value="Lipid_A_modif_metabolic_enz"/>
</dbReference>
<dbReference type="InterPro" id="IPR036291">
    <property type="entry name" value="NAD(P)-bd_dom_sf"/>
</dbReference>
<dbReference type="NCBIfam" id="NF005414">
    <property type="entry name" value="PRK06988.1"/>
    <property type="match status" value="1"/>
</dbReference>
<dbReference type="NCBIfam" id="NF005998">
    <property type="entry name" value="PRK08125.1"/>
    <property type="match status" value="1"/>
</dbReference>
<dbReference type="NCBIfam" id="NF008872">
    <property type="entry name" value="PRK11908.1"/>
    <property type="match status" value="1"/>
</dbReference>
<dbReference type="PANTHER" id="PTHR43245">
    <property type="entry name" value="BIFUNCTIONAL POLYMYXIN RESISTANCE PROTEIN ARNA"/>
    <property type="match status" value="1"/>
</dbReference>
<dbReference type="PANTHER" id="PTHR43245:SF13">
    <property type="entry name" value="UDP-D-APIOSE_UDP-D-XYLOSE SYNTHASE 2"/>
    <property type="match status" value="1"/>
</dbReference>
<dbReference type="Pfam" id="PF01370">
    <property type="entry name" value="Epimerase"/>
    <property type="match status" value="1"/>
</dbReference>
<dbReference type="Pfam" id="PF02911">
    <property type="entry name" value="Formyl_trans_C"/>
    <property type="match status" value="1"/>
</dbReference>
<dbReference type="Pfam" id="PF00551">
    <property type="entry name" value="Formyl_trans_N"/>
    <property type="match status" value="1"/>
</dbReference>
<dbReference type="PIRSF" id="PIRSF036506">
    <property type="entry name" value="Bifun_polymyxin_resist_ArnA"/>
    <property type="match status" value="1"/>
</dbReference>
<dbReference type="SUPFAM" id="SSF50486">
    <property type="entry name" value="FMT C-terminal domain-like"/>
    <property type="match status" value="1"/>
</dbReference>
<dbReference type="SUPFAM" id="SSF53328">
    <property type="entry name" value="Formyltransferase"/>
    <property type="match status" value="1"/>
</dbReference>
<dbReference type="SUPFAM" id="SSF51735">
    <property type="entry name" value="NAD(P)-binding Rossmann-fold domains"/>
    <property type="match status" value="1"/>
</dbReference>
<name>ARNA_SHIBS</name>
<comment type="function">
    <text evidence="1">Bifunctional enzyme that catalyzes the oxidative decarboxylation of UDP-glucuronic acid (UDP-GlcUA) to UDP-4-keto-arabinose (UDP-Ara4O) and the addition of a formyl group to UDP-4-amino-4-deoxy-L-arabinose (UDP-L-Ara4N) to form UDP-L-4-formamido-arabinose (UDP-L-Ara4FN). The modified arabinose is attached to lipid A and is required for resistance to polymyxin and cationic antimicrobial peptides.</text>
</comment>
<comment type="catalytic activity">
    <reaction evidence="1">
        <text>UDP-alpha-D-glucuronate + NAD(+) = UDP-beta-L-threo-pentopyranos-4-ulose + CO2 + NADH</text>
        <dbReference type="Rhea" id="RHEA:24702"/>
        <dbReference type="ChEBI" id="CHEBI:16526"/>
        <dbReference type="ChEBI" id="CHEBI:57540"/>
        <dbReference type="ChEBI" id="CHEBI:57945"/>
        <dbReference type="ChEBI" id="CHEBI:58052"/>
        <dbReference type="ChEBI" id="CHEBI:58710"/>
        <dbReference type="EC" id="1.1.1.305"/>
    </reaction>
</comment>
<comment type="catalytic activity">
    <reaction evidence="1">
        <text>UDP-4-amino-4-deoxy-beta-L-arabinose + (6R)-10-formyltetrahydrofolate = UDP-4-deoxy-4-formamido-beta-L-arabinose + (6S)-5,6,7,8-tetrahydrofolate + H(+)</text>
        <dbReference type="Rhea" id="RHEA:24706"/>
        <dbReference type="ChEBI" id="CHEBI:15378"/>
        <dbReference type="ChEBI" id="CHEBI:57453"/>
        <dbReference type="ChEBI" id="CHEBI:58708"/>
        <dbReference type="ChEBI" id="CHEBI:58709"/>
        <dbReference type="ChEBI" id="CHEBI:195366"/>
        <dbReference type="EC" id="2.1.2.13"/>
    </reaction>
</comment>
<comment type="pathway">
    <text evidence="1">Nucleotide-sugar biosynthesis; UDP-4-deoxy-4-formamido-beta-L-arabinose biosynthesis; UDP-4-deoxy-4-formamido-beta-L-arabinose from UDP-alpha-D-glucuronate: step 1/3.</text>
</comment>
<comment type="pathway">
    <text evidence="1">Nucleotide-sugar biosynthesis; UDP-4-deoxy-4-formamido-beta-L-arabinose biosynthesis; UDP-4-deoxy-4-formamido-beta-L-arabinose from UDP-alpha-D-glucuronate: step 3/3.</text>
</comment>
<comment type="pathway">
    <text evidence="1">Bacterial outer membrane biogenesis; lipopolysaccharide biosynthesis.</text>
</comment>
<comment type="subunit">
    <text evidence="1">Homohexamer, formed by a dimer of trimers.</text>
</comment>
<comment type="similarity">
    <text evidence="1">In the N-terminal section; belongs to the Fmt family. UDP-L-Ara4N formyltransferase subfamily.</text>
</comment>
<comment type="similarity">
    <text evidence="1">In the C-terminal section; belongs to the NAD(P)-dependent epimerase/dehydratase family. UDP-glucuronic acid decarboxylase subfamily.</text>
</comment>
<keyword id="KW-0046">Antibiotic resistance</keyword>
<keyword id="KW-0441">Lipid A biosynthesis</keyword>
<keyword id="KW-0444">Lipid biosynthesis</keyword>
<keyword id="KW-0443">Lipid metabolism</keyword>
<keyword id="KW-0448">Lipopolysaccharide biosynthesis</keyword>
<keyword id="KW-0511">Multifunctional enzyme</keyword>
<keyword id="KW-0520">NAD</keyword>
<keyword id="KW-0560">Oxidoreductase</keyword>
<keyword id="KW-0808">Transferase</keyword>
<gene>
    <name evidence="1" type="primary">arnA</name>
    <name type="ordered locus">SBO_2292</name>
</gene>
<organism>
    <name type="scientific">Shigella boydii serotype 4 (strain Sb227)</name>
    <dbReference type="NCBI Taxonomy" id="300268"/>
    <lineage>
        <taxon>Bacteria</taxon>
        <taxon>Pseudomonadati</taxon>
        <taxon>Pseudomonadota</taxon>
        <taxon>Gammaproteobacteria</taxon>
        <taxon>Enterobacterales</taxon>
        <taxon>Enterobacteriaceae</taxon>
        <taxon>Shigella</taxon>
    </lineage>
</organism>
<feature type="chain" id="PRO_0000281727" description="Bifunctional polymyxin resistance protein ArnA">
    <location>
        <begin position="1"/>
        <end position="660"/>
    </location>
</feature>
<feature type="region of interest" description="Formyltransferase ArnAFT">
    <location>
        <begin position="1"/>
        <end position="304"/>
    </location>
</feature>
<feature type="region of interest" description="Dehydrogenase ArnADH">
    <location>
        <begin position="314"/>
        <end position="660"/>
    </location>
</feature>
<feature type="active site" description="Proton donor; for formyltransferase activity" evidence="1">
    <location>
        <position position="104"/>
    </location>
</feature>
<feature type="active site" description="Proton acceptor; for decarboxylase activity" evidence="1">
    <location>
        <position position="434"/>
    </location>
</feature>
<feature type="active site" description="Proton donor; for decarboxylase activity" evidence="1">
    <location>
        <position position="619"/>
    </location>
</feature>
<feature type="binding site" evidence="1">
    <location>
        <begin position="86"/>
        <end position="88"/>
    </location>
    <ligand>
        <name>(6R)-10-formyltetrahydrofolate</name>
        <dbReference type="ChEBI" id="CHEBI:195366"/>
    </ligand>
</feature>
<feature type="binding site" evidence="1">
    <location>
        <position position="114"/>
    </location>
    <ligand>
        <name>(6R)-10-formyltetrahydrofolate</name>
        <dbReference type="ChEBI" id="CHEBI:195366"/>
    </ligand>
</feature>
<feature type="binding site" evidence="1">
    <location>
        <begin position="136"/>
        <end position="140"/>
    </location>
    <ligand>
        <name>(6R)-10-formyltetrahydrofolate</name>
        <dbReference type="ChEBI" id="CHEBI:195366"/>
    </ligand>
</feature>
<feature type="binding site" evidence="1">
    <location>
        <position position="347"/>
    </location>
    <ligand>
        <name>NAD(+)</name>
        <dbReference type="ChEBI" id="CHEBI:57540"/>
    </ligand>
</feature>
<feature type="binding site" evidence="1">
    <location>
        <begin position="368"/>
        <end position="369"/>
    </location>
    <ligand>
        <name>NAD(+)</name>
        <dbReference type="ChEBI" id="CHEBI:57540"/>
    </ligand>
</feature>
<feature type="binding site" evidence="1">
    <location>
        <position position="393"/>
    </location>
    <ligand>
        <name>UDP-alpha-D-glucuronate</name>
        <dbReference type="ChEBI" id="CHEBI:58052"/>
    </ligand>
</feature>
<feature type="binding site" evidence="1">
    <location>
        <position position="398"/>
    </location>
    <ligand>
        <name>UDP-alpha-D-glucuronate</name>
        <dbReference type="ChEBI" id="CHEBI:58052"/>
    </ligand>
</feature>
<feature type="binding site" evidence="1">
    <location>
        <begin position="432"/>
        <end position="433"/>
    </location>
    <ligand>
        <name>UDP-alpha-D-glucuronate</name>
        <dbReference type="ChEBI" id="CHEBI:58052"/>
    </ligand>
</feature>
<feature type="binding site" evidence="1">
    <location>
        <position position="460"/>
    </location>
    <ligand>
        <name>UDP-alpha-D-glucuronate</name>
        <dbReference type="ChEBI" id="CHEBI:58052"/>
    </ligand>
</feature>
<feature type="binding site" evidence="1">
    <location>
        <position position="492"/>
    </location>
    <ligand>
        <name>UDP-alpha-D-glucuronate</name>
        <dbReference type="ChEBI" id="CHEBI:58052"/>
    </ligand>
</feature>
<feature type="binding site" evidence="1">
    <location>
        <begin position="526"/>
        <end position="535"/>
    </location>
    <ligand>
        <name>UDP-alpha-D-glucuronate</name>
        <dbReference type="ChEBI" id="CHEBI:58052"/>
    </ligand>
</feature>
<feature type="binding site" evidence="1">
    <location>
        <position position="613"/>
    </location>
    <ligand>
        <name>UDP-alpha-D-glucuronate</name>
        <dbReference type="ChEBI" id="CHEBI:58052"/>
    </ligand>
</feature>
<feature type="site" description="Transition state stabilizer" evidence="1">
    <location>
        <position position="102"/>
    </location>
</feature>
<feature type="site" description="Raises pKa of active site His" evidence="1">
    <location>
        <position position="140"/>
    </location>
</feature>
<protein>
    <recommendedName>
        <fullName evidence="1">Bifunctional polymyxin resistance protein ArnA</fullName>
    </recommendedName>
    <domain>
        <recommendedName>
            <fullName evidence="1">UDP-4-amino-4-deoxy-L-arabinose formyltransferase</fullName>
            <ecNumber evidence="1">2.1.2.13</ecNumber>
        </recommendedName>
        <alternativeName>
            <fullName evidence="1">ArnAFT</fullName>
        </alternativeName>
        <alternativeName>
            <fullName evidence="1">UDP-L-Ara4N formyltransferase</fullName>
        </alternativeName>
    </domain>
    <domain>
        <recommendedName>
            <fullName evidence="1">UDP-glucuronic acid oxidase, UDP-4-keto-hexauronic acid decarboxylating</fullName>
            <ecNumber evidence="1">1.1.1.305</ecNumber>
        </recommendedName>
        <alternativeName>
            <fullName evidence="1">ArnADH</fullName>
        </alternativeName>
        <alternativeName>
            <fullName evidence="1">UDP-GlcUA decarboxylase</fullName>
        </alternativeName>
        <alternativeName>
            <fullName evidence="1">UDP-glucuronic acid dehydrogenase</fullName>
        </alternativeName>
    </domain>
</protein>
<proteinExistence type="inferred from homology"/>